<organism>
    <name type="scientific">Xylella fastidiosa (strain Temecula1 / ATCC 700964)</name>
    <dbReference type="NCBI Taxonomy" id="183190"/>
    <lineage>
        <taxon>Bacteria</taxon>
        <taxon>Pseudomonadati</taxon>
        <taxon>Pseudomonadota</taxon>
        <taxon>Gammaproteobacteria</taxon>
        <taxon>Lysobacterales</taxon>
        <taxon>Lysobacteraceae</taxon>
        <taxon>Xylella</taxon>
    </lineage>
</organism>
<reference key="1">
    <citation type="journal article" date="2003" name="J. Bacteriol.">
        <title>Comparative analyses of the complete genome sequences of Pierce's disease and citrus variegated chlorosis strains of Xylella fastidiosa.</title>
        <authorList>
            <person name="Van Sluys M.A."/>
            <person name="de Oliveira M.C."/>
            <person name="Monteiro-Vitorello C.B."/>
            <person name="Miyaki C.Y."/>
            <person name="Furlan L.R."/>
            <person name="Camargo L.E.A."/>
            <person name="da Silva A.C.R."/>
            <person name="Moon D.H."/>
            <person name="Takita M.A."/>
            <person name="Lemos E.G.M."/>
            <person name="Machado M.A."/>
            <person name="Ferro M.I.T."/>
            <person name="da Silva F.R."/>
            <person name="Goldman M.H.S."/>
            <person name="Goldman G.H."/>
            <person name="Lemos M.V.F."/>
            <person name="El-Dorry H."/>
            <person name="Tsai S.M."/>
            <person name="Carrer H."/>
            <person name="Carraro D.M."/>
            <person name="de Oliveira R.C."/>
            <person name="Nunes L.R."/>
            <person name="Siqueira W.J."/>
            <person name="Coutinho L.L."/>
            <person name="Kimura E.T."/>
            <person name="Ferro E.S."/>
            <person name="Harakava R."/>
            <person name="Kuramae E.E."/>
            <person name="Marino C.L."/>
            <person name="Giglioti E."/>
            <person name="Abreu I.L."/>
            <person name="Alves L.M.C."/>
            <person name="do Amaral A.M."/>
            <person name="Baia G.S."/>
            <person name="Blanco S.R."/>
            <person name="Brito M.S."/>
            <person name="Cannavan F.S."/>
            <person name="Celestino A.V."/>
            <person name="da Cunha A.F."/>
            <person name="Fenille R.C."/>
            <person name="Ferro J.A."/>
            <person name="Formighieri E.F."/>
            <person name="Kishi L.T."/>
            <person name="Leoni S.G."/>
            <person name="Oliveira A.R."/>
            <person name="Rosa V.E. Jr."/>
            <person name="Sassaki F.T."/>
            <person name="Sena J.A.D."/>
            <person name="de Souza A.A."/>
            <person name="Truffi D."/>
            <person name="Tsukumo F."/>
            <person name="Yanai G.M."/>
            <person name="Zaros L.G."/>
            <person name="Civerolo E.L."/>
            <person name="Simpson A.J.G."/>
            <person name="Almeida N.F. Jr."/>
            <person name="Setubal J.C."/>
            <person name="Kitajima J.P."/>
        </authorList>
    </citation>
    <scope>NUCLEOTIDE SEQUENCE [LARGE SCALE GENOMIC DNA]</scope>
    <source>
        <strain>Temecula1 / ATCC 700964</strain>
    </source>
</reference>
<sequence length="236" mass="24944">MDSFLRLLIHGASGRMGQSLLRLASEDPSFQVTAAVVGNAPHRHVSDGVPFFAAAELAAVPAFDVAIDFSLPQGFSSLLALCVARAVPLVSGTTGLDSRQHEALVMAGARIPLVWGSNFSVGMAVLVNLVERAGDALSGWDCDIVESHHVHKQDAPSGSALTLGEAVACKGIAPRYTSLRAGDIIGDHLVQFTGLGERIELVHRASNRDVFARGALSVARRVVGRVPGCYRVRDLM</sequence>
<protein>
    <recommendedName>
        <fullName evidence="1">4-hydroxy-tetrahydrodipicolinate reductase</fullName>
        <shortName evidence="1">HTPA reductase</shortName>
        <ecNumber evidence="1">1.17.1.8</ecNumber>
    </recommendedName>
</protein>
<dbReference type="EC" id="1.17.1.8" evidence="1"/>
<dbReference type="EMBL" id="AE009442">
    <property type="protein sequence ID" value="AAO28277.1"/>
    <property type="molecule type" value="Genomic_DNA"/>
</dbReference>
<dbReference type="SMR" id="Q87EC0"/>
<dbReference type="KEGG" id="xft:PD_0397"/>
<dbReference type="HOGENOM" id="CLU_047479_2_2_6"/>
<dbReference type="UniPathway" id="UPA00034">
    <property type="reaction ID" value="UER00018"/>
</dbReference>
<dbReference type="Proteomes" id="UP000002516">
    <property type="component" value="Chromosome"/>
</dbReference>
<dbReference type="GO" id="GO:0005829">
    <property type="term" value="C:cytosol"/>
    <property type="evidence" value="ECO:0007669"/>
    <property type="project" value="TreeGrafter"/>
</dbReference>
<dbReference type="GO" id="GO:0008839">
    <property type="term" value="F:4-hydroxy-tetrahydrodipicolinate reductase"/>
    <property type="evidence" value="ECO:0007669"/>
    <property type="project" value="UniProtKB-EC"/>
</dbReference>
<dbReference type="GO" id="GO:0051287">
    <property type="term" value="F:NAD binding"/>
    <property type="evidence" value="ECO:0007669"/>
    <property type="project" value="UniProtKB-UniRule"/>
</dbReference>
<dbReference type="GO" id="GO:0050661">
    <property type="term" value="F:NADP binding"/>
    <property type="evidence" value="ECO:0007669"/>
    <property type="project" value="UniProtKB-UniRule"/>
</dbReference>
<dbReference type="GO" id="GO:0016726">
    <property type="term" value="F:oxidoreductase activity, acting on CH or CH2 groups, NAD or NADP as acceptor"/>
    <property type="evidence" value="ECO:0007669"/>
    <property type="project" value="UniProtKB-UniRule"/>
</dbReference>
<dbReference type="GO" id="GO:0019877">
    <property type="term" value="P:diaminopimelate biosynthetic process"/>
    <property type="evidence" value="ECO:0007669"/>
    <property type="project" value="UniProtKB-UniRule"/>
</dbReference>
<dbReference type="GO" id="GO:0009089">
    <property type="term" value="P:lysine biosynthetic process via diaminopimelate"/>
    <property type="evidence" value="ECO:0007669"/>
    <property type="project" value="UniProtKB-UniRule"/>
</dbReference>
<dbReference type="CDD" id="cd02274">
    <property type="entry name" value="DHDPR_N"/>
    <property type="match status" value="1"/>
</dbReference>
<dbReference type="Gene3D" id="3.30.360.10">
    <property type="entry name" value="Dihydrodipicolinate Reductase, domain 2"/>
    <property type="match status" value="1"/>
</dbReference>
<dbReference type="Gene3D" id="3.40.50.720">
    <property type="entry name" value="NAD(P)-binding Rossmann-like Domain"/>
    <property type="match status" value="1"/>
</dbReference>
<dbReference type="HAMAP" id="MF_00102">
    <property type="entry name" value="DapB"/>
    <property type="match status" value="1"/>
</dbReference>
<dbReference type="InterPro" id="IPR022663">
    <property type="entry name" value="DapB_C"/>
</dbReference>
<dbReference type="InterPro" id="IPR000846">
    <property type="entry name" value="DapB_N"/>
</dbReference>
<dbReference type="InterPro" id="IPR022664">
    <property type="entry name" value="DapB_N_CS"/>
</dbReference>
<dbReference type="InterPro" id="IPR023940">
    <property type="entry name" value="DHDPR_bac"/>
</dbReference>
<dbReference type="InterPro" id="IPR036291">
    <property type="entry name" value="NAD(P)-bd_dom_sf"/>
</dbReference>
<dbReference type="NCBIfam" id="TIGR00036">
    <property type="entry name" value="dapB"/>
    <property type="match status" value="1"/>
</dbReference>
<dbReference type="PANTHER" id="PTHR20836:SF0">
    <property type="entry name" value="4-HYDROXY-TETRAHYDRODIPICOLINATE REDUCTASE 1, CHLOROPLASTIC-RELATED"/>
    <property type="match status" value="1"/>
</dbReference>
<dbReference type="PANTHER" id="PTHR20836">
    <property type="entry name" value="DIHYDRODIPICOLINATE REDUCTASE"/>
    <property type="match status" value="1"/>
</dbReference>
<dbReference type="Pfam" id="PF05173">
    <property type="entry name" value="DapB_C"/>
    <property type="match status" value="1"/>
</dbReference>
<dbReference type="Pfam" id="PF01113">
    <property type="entry name" value="DapB_N"/>
    <property type="match status" value="1"/>
</dbReference>
<dbReference type="PIRSF" id="PIRSF000161">
    <property type="entry name" value="DHPR"/>
    <property type="match status" value="1"/>
</dbReference>
<dbReference type="SUPFAM" id="SSF55347">
    <property type="entry name" value="Glyceraldehyde-3-phosphate dehydrogenase-like, C-terminal domain"/>
    <property type="match status" value="1"/>
</dbReference>
<dbReference type="SUPFAM" id="SSF51735">
    <property type="entry name" value="NAD(P)-binding Rossmann-fold domains"/>
    <property type="match status" value="1"/>
</dbReference>
<dbReference type="PROSITE" id="PS01298">
    <property type="entry name" value="DAPB"/>
    <property type="match status" value="1"/>
</dbReference>
<keyword id="KW-0028">Amino-acid biosynthesis</keyword>
<keyword id="KW-0963">Cytoplasm</keyword>
<keyword id="KW-0220">Diaminopimelate biosynthesis</keyword>
<keyword id="KW-0457">Lysine biosynthesis</keyword>
<keyword id="KW-0520">NAD</keyword>
<keyword id="KW-0521">NADP</keyword>
<keyword id="KW-0560">Oxidoreductase</keyword>
<keyword id="KW-1185">Reference proteome</keyword>
<gene>
    <name evidence="1" type="primary">dapB</name>
    <name type="ordered locus">PD_0397</name>
</gene>
<comment type="function">
    <text evidence="1">Catalyzes the conversion of 4-hydroxy-tetrahydrodipicolinate (HTPA) to tetrahydrodipicolinate.</text>
</comment>
<comment type="catalytic activity">
    <reaction evidence="1">
        <text>(S)-2,3,4,5-tetrahydrodipicolinate + NAD(+) + H2O = (2S,4S)-4-hydroxy-2,3,4,5-tetrahydrodipicolinate + NADH + H(+)</text>
        <dbReference type="Rhea" id="RHEA:35323"/>
        <dbReference type="ChEBI" id="CHEBI:15377"/>
        <dbReference type="ChEBI" id="CHEBI:15378"/>
        <dbReference type="ChEBI" id="CHEBI:16845"/>
        <dbReference type="ChEBI" id="CHEBI:57540"/>
        <dbReference type="ChEBI" id="CHEBI:57945"/>
        <dbReference type="ChEBI" id="CHEBI:67139"/>
        <dbReference type="EC" id="1.17.1.8"/>
    </reaction>
</comment>
<comment type="catalytic activity">
    <reaction evidence="1">
        <text>(S)-2,3,4,5-tetrahydrodipicolinate + NADP(+) + H2O = (2S,4S)-4-hydroxy-2,3,4,5-tetrahydrodipicolinate + NADPH + H(+)</text>
        <dbReference type="Rhea" id="RHEA:35331"/>
        <dbReference type="ChEBI" id="CHEBI:15377"/>
        <dbReference type="ChEBI" id="CHEBI:15378"/>
        <dbReference type="ChEBI" id="CHEBI:16845"/>
        <dbReference type="ChEBI" id="CHEBI:57783"/>
        <dbReference type="ChEBI" id="CHEBI:58349"/>
        <dbReference type="ChEBI" id="CHEBI:67139"/>
        <dbReference type="EC" id="1.17.1.8"/>
    </reaction>
</comment>
<comment type="pathway">
    <text evidence="1">Amino-acid biosynthesis; L-lysine biosynthesis via DAP pathway; (S)-tetrahydrodipicolinate from L-aspartate: step 4/4.</text>
</comment>
<comment type="subcellular location">
    <subcellularLocation>
        <location evidence="1">Cytoplasm</location>
    </subcellularLocation>
</comment>
<comment type="similarity">
    <text evidence="1">Belongs to the DapB family.</text>
</comment>
<comment type="caution">
    <text evidence="2">Was originally thought to be a dihydrodipicolinate reductase (DHDPR), catalyzing the conversion of dihydrodipicolinate to tetrahydrodipicolinate. However, it was shown in E.coli that the substrate of the enzymatic reaction is not dihydrodipicolinate (DHDP) but in fact (2S,4S)-4-hydroxy-2,3,4,5-tetrahydrodipicolinic acid (HTPA), the product released by the DapA-catalyzed reaction.</text>
</comment>
<evidence type="ECO:0000255" key="1">
    <source>
        <dbReference type="HAMAP-Rule" id="MF_00102"/>
    </source>
</evidence>
<evidence type="ECO:0000305" key="2"/>
<feature type="chain" id="PRO_0000141513" description="4-hydroxy-tetrahydrodipicolinate reductase">
    <location>
        <begin position="1"/>
        <end position="236"/>
    </location>
</feature>
<feature type="active site" description="Proton donor/acceptor" evidence="1">
    <location>
        <position position="148"/>
    </location>
</feature>
<feature type="active site" description="Proton donor" evidence="1">
    <location>
        <position position="152"/>
    </location>
</feature>
<feature type="binding site" evidence="1">
    <location>
        <begin position="11"/>
        <end position="16"/>
    </location>
    <ligand>
        <name>NAD(+)</name>
        <dbReference type="ChEBI" id="CHEBI:57540"/>
    </ligand>
</feature>
<feature type="binding site" evidence="1">
    <location>
        <begin position="92"/>
        <end position="94"/>
    </location>
    <ligand>
        <name>NAD(+)</name>
        <dbReference type="ChEBI" id="CHEBI:57540"/>
    </ligand>
</feature>
<feature type="binding site" evidence="1">
    <location>
        <begin position="116"/>
        <end position="119"/>
    </location>
    <ligand>
        <name>NAD(+)</name>
        <dbReference type="ChEBI" id="CHEBI:57540"/>
    </ligand>
</feature>
<feature type="binding site" evidence="1">
    <location>
        <position position="149"/>
    </location>
    <ligand>
        <name>(S)-2,3,4,5-tetrahydrodipicolinate</name>
        <dbReference type="ChEBI" id="CHEBI:16845"/>
    </ligand>
</feature>
<feature type="binding site" evidence="1">
    <location>
        <begin position="158"/>
        <end position="159"/>
    </location>
    <ligand>
        <name>(S)-2,3,4,5-tetrahydrodipicolinate</name>
        <dbReference type="ChEBI" id="CHEBI:16845"/>
    </ligand>
</feature>
<accession>Q87EC0</accession>
<proteinExistence type="inferred from homology"/>
<name>DAPB_XYLFT</name>